<protein>
    <recommendedName>
        <fullName evidence="1">Serine/threonine-protein kinase/endoribonuclease IRE1</fullName>
    </recommendedName>
    <alternativeName>
        <fullName evidence="1">Endoplasmic reticulum-to-nucleus signaling 1</fullName>
    </alternativeName>
    <domain>
        <recommendedName>
            <fullName>Serine/threonine-protein kinase</fullName>
            <ecNumber evidence="1">2.7.11.1</ecNumber>
        </recommendedName>
    </domain>
    <domain>
        <recommendedName>
            <fullName>Endoribonuclease</fullName>
            <ecNumber evidence="1">3.1.26.-</ecNumber>
        </recommendedName>
    </domain>
</protein>
<gene>
    <name evidence="8" type="primary">IRE1</name>
    <name evidence="11" type="ORF">TRIREDRAFT_45242</name>
</gene>
<keyword id="KW-0067">ATP-binding</keyword>
<keyword id="KW-0256">Endoplasmic reticulum</keyword>
<keyword id="KW-0325">Glycoprotein</keyword>
<keyword id="KW-0378">Hydrolase</keyword>
<keyword id="KW-0418">Kinase</keyword>
<keyword id="KW-0460">Magnesium</keyword>
<keyword id="KW-0472">Membrane</keyword>
<keyword id="KW-0479">Metal-binding</keyword>
<keyword id="KW-0547">Nucleotide-binding</keyword>
<keyword id="KW-1185">Reference proteome</keyword>
<keyword id="KW-0723">Serine/threonine-protein kinase</keyword>
<keyword id="KW-0732">Signal</keyword>
<keyword id="KW-0808">Transferase</keyword>
<keyword id="KW-0812">Transmembrane</keyword>
<keyword id="KW-1133">Transmembrane helix</keyword>
<comment type="function">
    <text evidence="7">Senses unfolded proteins in the lumen of the endoplasmic reticulum via its N-terminal domain which leads to enzyme auto-activation (PubMed:15480788). The active endoribonuclease domain splices precursor mRNAs to produce their mature form which then induces transcription of UPR target genes (PubMed:15480788).</text>
</comment>
<comment type="catalytic activity">
    <reaction evidence="1">
        <text>L-seryl-[protein] + ATP = O-phospho-L-seryl-[protein] + ADP + H(+)</text>
        <dbReference type="Rhea" id="RHEA:17989"/>
        <dbReference type="Rhea" id="RHEA-COMP:9863"/>
        <dbReference type="Rhea" id="RHEA-COMP:11604"/>
        <dbReference type="ChEBI" id="CHEBI:15378"/>
        <dbReference type="ChEBI" id="CHEBI:29999"/>
        <dbReference type="ChEBI" id="CHEBI:30616"/>
        <dbReference type="ChEBI" id="CHEBI:83421"/>
        <dbReference type="ChEBI" id="CHEBI:456216"/>
        <dbReference type="EC" id="2.7.11.1"/>
    </reaction>
    <physiologicalReaction direction="left-to-right" evidence="1">
        <dbReference type="Rhea" id="RHEA:17990"/>
    </physiologicalReaction>
</comment>
<comment type="catalytic activity">
    <reaction evidence="1">
        <text>L-threonyl-[protein] + ATP = O-phospho-L-threonyl-[protein] + ADP + H(+)</text>
        <dbReference type="Rhea" id="RHEA:46608"/>
        <dbReference type="Rhea" id="RHEA-COMP:11060"/>
        <dbReference type="Rhea" id="RHEA-COMP:11605"/>
        <dbReference type="ChEBI" id="CHEBI:15378"/>
        <dbReference type="ChEBI" id="CHEBI:30013"/>
        <dbReference type="ChEBI" id="CHEBI:30616"/>
        <dbReference type="ChEBI" id="CHEBI:61977"/>
        <dbReference type="ChEBI" id="CHEBI:456216"/>
        <dbReference type="EC" id="2.7.11.1"/>
    </reaction>
    <physiologicalReaction direction="left-to-right" evidence="1">
        <dbReference type="Rhea" id="RHEA:46609"/>
    </physiologicalReaction>
</comment>
<comment type="cofactor">
    <cofactor evidence="1">
        <name>Mg(2+)</name>
        <dbReference type="ChEBI" id="CHEBI:18420"/>
    </cofactor>
</comment>
<comment type="subcellular location">
    <subcellularLocation>
        <location evidence="1">Endoplasmic reticulum membrane</location>
        <topology evidence="1">Single-pass type I membrane protein</topology>
    </subcellularLocation>
</comment>
<comment type="PTM">
    <text evidence="1">Autophosphorylated mainly on serine residues; phosphorylation enables nucleotide binding by the active site.</text>
</comment>
<comment type="similarity">
    <text evidence="9">Belongs to the protein kinase superfamily. Ser/Thr protein kinase family.</text>
</comment>
<name>IRE1_HYPJQ</name>
<reference evidence="10" key="1">
    <citation type="journal article" date="2004" name="Mol. Genet. Genomics">
        <title>The ire1 and ptc2 genes involved in the unfolded protein response pathway in the filamentous fungus Trichoderma reesei.</title>
        <authorList>
            <person name="Valkonen M."/>
            <person name="Penttila M."/>
            <person name="Saloheimo M."/>
        </authorList>
    </citation>
    <scope>NUCLEOTIDE SEQUENCE [MRNA]</scope>
    <scope>FUNCTION</scope>
    <source>
        <strain evidence="8">QM6a</strain>
    </source>
</reference>
<reference evidence="12" key="2">
    <citation type="journal article" date="2008" name="Nat. Biotechnol.">
        <title>Genome sequencing and analysis of the biomass-degrading fungus Trichoderma reesei (syn. Hypocrea jecorina).</title>
        <authorList>
            <person name="Martinez D."/>
            <person name="Berka R.M."/>
            <person name="Henrissat B."/>
            <person name="Saloheimo M."/>
            <person name="Arvas M."/>
            <person name="Baker S.E."/>
            <person name="Chapman J."/>
            <person name="Chertkov O."/>
            <person name="Coutinho P.M."/>
            <person name="Cullen D."/>
            <person name="Danchin E.G."/>
            <person name="Grigoriev I.V."/>
            <person name="Harris P."/>
            <person name="Jackson M."/>
            <person name="Kubicek C.P."/>
            <person name="Han C.S."/>
            <person name="Ho I."/>
            <person name="Larrondo L.F."/>
            <person name="de Leon A.L."/>
            <person name="Magnuson J.K."/>
            <person name="Merino S."/>
            <person name="Misra M."/>
            <person name="Nelson B."/>
            <person name="Putnam N."/>
            <person name="Robbertse B."/>
            <person name="Salamov A.A."/>
            <person name="Schmoll M."/>
            <person name="Terry A."/>
            <person name="Thayer N."/>
            <person name="Westerholm-Parvinen A."/>
            <person name="Schoch C.L."/>
            <person name="Yao J."/>
            <person name="Barabote R."/>
            <person name="Nelson M.A."/>
            <person name="Detter C."/>
            <person name="Bruce D."/>
            <person name="Kuske C.R."/>
            <person name="Xie G."/>
            <person name="Richardson P."/>
            <person name="Rokhsar D.S."/>
            <person name="Lucas S.M."/>
            <person name="Rubin E.M."/>
            <person name="Dunn-Coleman N."/>
            <person name="Ward M."/>
            <person name="Brettin T.S."/>
        </authorList>
    </citation>
    <scope>NUCLEOTIDE SEQUENCE [LARGE SCALE GENOMIC DNA]</scope>
    <source>
        <strain evidence="12">QM6a</strain>
    </source>
</reference>
<feature type="signal peptide" evidence="2">
    <location>
        <begin position="1"/>
        <end position="35"/>
    </location>
</feature>
<feature type="chain" id="PRO_5003408180" description="Serine/threonine-protein kinase/endoribonuclease IRE1" evidence="2">
    <location>
        <begin position="36"/>
        <end position="1243"/>
    </location>
</feature>
<feature type="topological domain" description="Lumenal" evidence="9">
    <location>
        <begin position="36"/>
        <end position="585"/>
    </location>
</feature>
<feature type="transmembrane region" description="Helical" evidence="2">
    <location>
        <begin position="586"/>
        <end position="606"/>
    </location>
</feature>
<feature type="topological domain" description="Cytoplasmic" evidence="9">
    <location>
        <begin position="607"/>
        <end position="1243"/>
    </location>
</feature>
<feature type="domain" description="Protein kinase" evidence="3">
    <location>
        <begin position="809"/>
        <end position="1105"/>
    </location>
</feature>
<feature type="domain" description="KEN" evidence="5">
    <location>
        <begin position="1108"/>
        <end position="1240"/>
    </location>
</feature>
<feature type="region of interest" description="Disordered" evidence="6">
    <location>
        <begin position="70"/>
        <end position="132"/>
    </location>
</feature>
<feature type="region of interest" description="Disordered" evidence="6">
    <location>
        <begin position="149"/>
        <end position="172"/>
    </location>
</feature>
<feature type="region of interest" description="Disordered" evidence="6">
    <location>
        <begin position="638"/>
        <end position="765"/>
    </location>
</feature>
<feature type="compositionally biased region" description="Basic and acidic residues" evidence="6">
    <location>
        <begin position="73"/>
        <end position="85"/>
    </location>
</feature>
<feature type="compositionally biased region" description="Polar residues" evidence="6">
    <location>
        <begin position="90"/>
        <end position="99"/>
    </location>
</feature>
<feature type="compositionally biased region" description="Low complexity" evidence="6">
    <location>
        <begin position="163"/>
        <end position="172"/>
    </location>
</feature>
<feature type="compositionally biased region" description="Low complexity" evidence="6">
    <location>
        <begin position="650"/>
        <end position="660"/>
    </location>
</feature>
<feature type="compositionally biased region" description="Basic and acidic residues" evidence="6">
    <location>
        <begin position="674"/>
        <end position="693"/>
    </location>
</feature>
<feature type="compositionally biased region" description="Basic residues" evidence="6">
    <location>
        <begin position="732"/>
        <end position="749"/>
    </location>
</feature>
<feature type="active site" description="Proton acceptor" evidence="3">
    <location>
        <position position="931"/>
    </location>
</feature>
<feature type="binding site" evidence="3">
    <location>
        <begin position="815"/>
        <end position="823"/>
    </location>
    <ligand>
        <name>ATP</name>
        <dbReference type="ChEBI" id="CHEBI:30616"/>
    </ligand>
</feature>
<feature type="binding site" evidence="1">
    <location>
        <position position="819"/>
    </location>
    <ligand>
        <name>ADP</name>
        <dbReference type="ChEBI" id="CHEBI:456216"/>
    </ligand>
</feature>
<feature type="binding site" evidence="1">
    <location>
        <position position="837"/>
    </location>
    <ligand>
        <name>ADP</name>
        <dbReference type="ChEBI" id="CHEBI:456216"/>
    </ligand>
</feature>
<feature type="binding site" evidence="3">
    <location>
        <position position="837"/>
    </location>
    <ligand>
        <name>ATP</name>
        <dbReference type="ChEBI" id="CHEBI:30616"/>
    </ligand>
</feature>
<feature type="binding site" evidence="1">
    <location>
        <position position="881"/>
    </location>
    <ligand>
        <name>ADP</name>
        <dbReference type="ChEBI" id="CHEBI:456216"/>
    </ligand>
</feature>
<feature type="binding site" evidence="1">
    <location>
        <position position="883"/>
    </location>
    <ligand>
        <name>ADP</name>
        <dbReference type="ChEBI" id="CHEBI:456216"/>
    </ligand>
</feature>
<feature type="binding site" evidence="1">
    <location>
        <position position="936"/>
    </location>
    <ligand>
        <name>Mg(2+)</name>
        <dbReference type="ChEBI" id="CHEBI:18420"/>
    </ligand>
</feature>
<feature type="binding site" evidence="1">
    <location>
        <position position="953"/>
    </location>
    <ligand>
        <name>Mg(2+)</name>
        <dbReference type="ChEBI" id="CHEBI:18420"/>
    </ligand>
</feature>
<feature type="glycosylation site" description="N-linked (GlcNAc...) asparagine" evidence="4">
    <location>
        <position position="226"/>
    </location>
</feature>
<feature type="glycosylation site" description="N-linked (GlcNAc...) asparagine" evidence="4">
    <location>
        <position position="470"/>
    </location>
</feature>
<feature type="glycosylation site" description="N-linked (GlcNAc...) asparagine" evidence="4">
    <location>
        <position position="554"/>
    </location>
</feature>
<organism evidence="12">
    <name type="scientific">Hypocrea jecorina (strain QM6a)</name>
    <name type="common">Trichoderma reesei</name>
    <dbReference type="NCBI Taxonomy" id="431241"/>
    <lineage>
        <taxon>Eukaryota</taxon>
        <taxon>Fungi</taxon>
        <taxon>Dikarya</taxon>
        <taxon>Ascomycota</taxon>
        <taxon>Pezizomycotina</taxon>
        <taxon>Sordariomycetes</taxon>
        <taxon>Hypocreomycetidae</taxon>
        <taxon>Hypocreales</taxon>
        <taxon>Hypocreaceae</taxon>
        <taxon>Trichoderma</taxon>
    </lineage>
</organism>
<sequence>MMRRPPSQGRWSASHQKLLLAFAFILIPWLQLADAQQQPQQPQIRIHSQRGDAPLDKVADDANTRWYATHAAPDVHPEAKFDTVNRKQKQQSTASPQQHQKYRRAPYDYASKDKAQNRYAQHPIRESEKPNYVKVPNDASALATLAPAQPVRAPHTSRHHWPSSSAASGLASPQNARSLEDWEVEDFVLLATVDGDLYASDRKTGRHLWHLEVDQPVVETKHYRTNNSVLDDDYRPVDHYIWAVEPSRDGGLYVWIPDSGAGLVRTGFTMKHLVEELAPYAGDEPPVVYTGDKKTTMVTLDAATGRVLKWFGSSGSQVNEAESCLRPNAFDDRDTTECSSMGTITLGRTEYTVGIQRRDGRPIATLKYAEWGPNTFDSDLYQQYHASLDNHYITSQHDGRIYAFDKSQAENDLPLYTHKFSSPVARVFDVCRPWDANAGSNPELVVLPQPPIPALDESTVKMRSNSIFLNQTESGDWYALSGRAYPLILDAPVAQISRDDLWDMAHAFDSINPNKLSKALVGTHFLNPVKSTGYHQPPTLPAGALDEYYEDLENASNNAHAVTNTVPEEPTIITKVKALPQSAANSVIDFVSNPILIIFLIGSLIYNEKKLRRSYHRFRTHGTIKDVYPFFVIESEAGDESGDDKDGVFPSSPSPRSQPQDQNAEDHLSRHKVERNAGDQDKVKDNRSLHDVSDTLEPSNKTVEKTADVVKQVDVAGPDAPSTDSNGAAPEKKKKAHRGRRGGVKHRKGRPTDGSQSHENDPALTTVDEAVSNAKKLGDRPSLEPDVMTIYNDMQAVTGSVISMGNIEVDTDVELGMGSNGTVVFAGRFDGRDVAVKRMTIQFYDIATRETKLLRESDDHPNVIRYYSQVQRGDFLYIALERCAASLADVIEKPYAFGELAKAGQKDLPGVLYQITNGISHLHSLRIVHRDLKPQNILVNLDKDGRPRLLVSDFGLCKKLEDRQSSFGATTGRAAGTSGWRAPELLLDDDGQNPAAIDSSTHSGSHTILVGDPNSLSNGGRATRAIDIFSLGLVFFYVLTNGSHPFDCGDRYMREVNIRKGNYNLDPLDALGDFAYEAKDLIASMLQASPKARPDSREVMAHPFFWSPKKRLAFLCDVSDSLEKEVRDPPSPALVELERHAPEVIKGDFLKVLTRDFVESLGKQRKYTGNKLLDLLRALRNKRNHYEDMSDSLKRSVGSLPDGYLAYWTVKFPMLLLTCWNVVYNLEWEKTDRFREYYEPAGL</sequence>
<evidence type="ECO:0000250" key="1">
    <source>
        <dbReference type="UniProtKB" id="P32361"/>
    </source>
</evidence>
<evidence type="ECO:0000255" key="2"/>
<evidence type="ECO:0000255" key="3">
    <source>
        <dbReference type="PROSITE-ProRule" id="PRU00159"/>
    </source>
</evidence>
<evidence type="ECO:0000255" key="4">
    <source>
        <dbReference type="PROSITE-ProRule" id="PRU00498"/>
    </source>
</evidence>
<evidence type="ECO:0000255" key="5">
    <source>
        <dbReference type="PROSITE-ProRule" id="PRU00725"/>
    </source>
</evidence>
<evidence type="ECO:0000256" key="6">
    <source>
        <dbReference type="SAM" id="MobiDB-lite"/>
    </source>
</evidence>
<evidence type="ECO:0000269" key="7">
    <source>
    </source>
</evidence>
<evidence type="ECO:0000303" key="8">
    <source>
    </source>
</evidence>
<evidence type="ECO:0000305" key="9"/>
<evidence type="ECO:0000312" key="10">
    <source>
        <dbReference type="EMBL" id="AAP92915.1"/>
    </source>
</evidence>
<evidence type="ECO:0000312" key="11">
    <source>
        <dbReference type="EMBL" id="EGR51316.1"/>
    </source>
</evidence>
<evidence type="ECO:0000312" key="12">
    <source>
        <dbReference type="Proteomes" id="UP000008984"/>
    </source>
</evidence>
<accession>G0RBE3</accession>
<accession>Q7Z8F3</accession>
<proteinExistence type="evidence at transcript level"/>
<dbReference type="EC" id="2.7.11.1" evidence="1"/>
<dbReference type="EC" id="3.1.26.-" evidence="1"/>
<dbReference type="EMBL" id="AY328083">
    <property type="protein sequence ID" value="AAP92915.1"/>
    <property type="molecule type" value="mRNA"/>
</dbReference>
<dbReference type="EMBL" id="GL985058">
    <property type="protein sequence ID" value="EGR51316.1"/>
    <property type="molecule type" value="Genomic_DNA"/>
</dbReference>
<dbReference type="RefSeq" id="XP_006962552.1">
    <property type="nucleotide sequence ID" value="XM_006962490.1"/>
</dbReference>
<dbReference type="STRING" id="431241.G0RBE3"/>
<dbReference type="EnsemblFungi" id="EGR51316">
    <property type="protein sequence ID" value="EGR51316"/>
    <property type="gene ID" value="TRIREDRAFT_45242"/>
</dbReference>
<dbReference type="GeneID" id="18485027"/>
<dbReference type="KEGG" id="tre:TRIREDRAFT_45242"/>
<dbReference type="VEuPathDB" id="FungiDB:TRIREDRAFT_45242"/>
<dbReference type="VEuPathDB" id="FungiDB:TrQ_010124"/>
<dbReference type="eggNOG" id="KOG1027">
    <property type="taxonomic scope" value="Eukaryota"/>
</dbReference>
<dbReference type="HOGENOM" id="CLU_004875_2_0_1"/>
<dbReference type="OMA" id="QCYEKDY"/>
<dbReference type="OrthoDB" id="63989at2759"/>
<dbReference type="Proteomes" id="UP000008984">
    <property type="component" value="Unassembled WGS sequence"/>
</dbReference>
<dbReference type="GO" id="GO:1990604">
    <property type="term" value="C:IRE1-TRAF2-ASK1 complex"/>
    <property type="evidence" value="ECO:0007669"/>
    <property type="project" value="TreeGrafter"/>
</dbReference>
<dbReference type="GO" id="GO:0005524">
    <property type="term" value="F:ATP binding"/>
    <property type="evidence" value="ECO:0007669"/>
    <property type="project" value="UniProtKB-KW"/>
</dbReference>
<dbReference type="GO" id="GO:0046872">
    <property type="term" value="F:metal ion binding"/>
    <property type="evidence" value="ECO:0007669"/>
    <property type="project" value="UniProtKB-KW"/>
</dbReference>
<dbReference type="GO" id="GO:0004674">
    <property type="term" value="F:protein serine/threonine kinase activity"/>
    <property type="evidence" value="ECO:0000314"/>
    <property type="project" value="UniProtKB"/>
</dbReference>
<dbReference type="GO" id="GO:0004521">
    <property type="term" value="F:RNA endonuclease activity"/>
    <property type="evidence" value="ECO:0000316"/>
    <property type="project" value="UniProtKB"/>
</dbReference>
<dbReference type="GO" id="GO:0051082">
    <property type="term" value="F:unfolded protein binding"/>
    <property type="evidence" value="ECO:0000316"/>
    <property type="project" value="UniProtKB"/>
</dbReference>
<dbReference type="GO" id="GO:0070059">
    <property type="term" value="P:intrinsic apoptotic signaling pathway in response to endoplasmic reticulum stress"/>
    <property type="evidence" value="ECO:0007669"/>
    <property type="project" value="TreeGrafter"/>
</dbReference>
<dbReference type="GO" id="GO:0036498">
    <property type="term" value="P:IRE1-mediated unfolded protein response"/>
    <property type="evidence" value="ECO:0000316"/>
    <property type="project" value="UniProtKB"/>
</dbReference>
<dbReference type="GO" id="GO:0006397">
    <property type="term" value="P:mRNA processing"/>
    <property type="evidence" value="ECO:0007669"/>
    <property type="project" value="InterPro"/>
</dbReference>
<dbReference type="CDD" id="cd09769">
    <property type="entry name" value="Luminal_IRE1"/>
    <property type="match status" value="1"/>
</dbReference>
<dbReference type="CDD" id="cd10422">
    <property type="entry name" value="RNase_Ire1"/>
    <property type="match status" value="1"/>
</dbReference>
<dbReference type="FunFam" id="3.30.200.20:FF:000077">
    <property type="entry name" value="Putative Serine/threonine-protein kinase/endoribonuclease IRE1"/>
    <property type="match status" value="1"/>
</dbReference>
<dbReference type="FunFam" id="1.10.510.10:FF:000572">
    <property type="entry name" value="Serine/threonine-protein kinase/endoribonuclease IRE1"/>
    <property type="match status" value="1"/>
</dbReference>
<dbReference type="Gene3D" id="1.20.1440.180">
    <property type="entry name" value="KEN domain"/>
    <property type="match status" value="1"/>
</dbReference>
<dbReference type="Gene3D" id="3.30.200.20">
    <property type="entry name" value="Phosphorylase Kinase, domain 1"/>
    <property type="match status" value="1"/>
</dbReference>
<dbReference type="Gene3D" id="1.10.510.10">
    <property type="entry name" value="Transferase(Phosphotransferase) domain 1"/>
    <property type="match status" value="1"/>
</dbReference>
<dbReference type="Gene3D" id="2.130.10.10">
    <property type="entry name" value="YVTN repeat-like/Quinoprotein amine dehydrogenase"/>
    <property type="match status" value="1"/>
</dbReference>
<dbReference type="InterPro" id="IPR045133">
    <property type="entry name" value="IRE1/2-like"/>
</dbReference>
<dbReference type="InterPro" id="IPR010513">
    <property type="entry name" value="KEN_dom"/>
</dbReference>
<dbReference type="InterPro" id="IPR038357">
    <property type="entry name" value="KEN_sf"/>
</dbReference>
<dbReference type="InterPro" id="IPR011009">
    <property type="entry name" value="Kinase-like_dom_sf"/>
</dbReference>
<dbReference type="InterPro" id="IPR000719">
    <property type="entry name" value="Prot_kinase_dom"/>
</dbReference>
<dbReference type="InterPro" id="IPR017441">
    <property type="entry name" value="Protein_kinase_ATP_BS"/>
</dbReference>
<dbReference type="InterPro" id="IPR011047">
    <property type="entry name" value="Quinoprotein_ADH-like_sf"/>
</dbReference>
<dbReference type="InterPro" id="IPR008271">
    <property type="entry name" value="Ser/Thr_kinase_AS"/>
</dbReference>
<dbReference type="InterPro" id="IPR015943">
    <property type="entry name" value="WD40/YVTN_repeat-like_dom_sf"/>
</dbReference>
<dbReference type="PANTHER" id="PTHR13954">
    <property type="entry name" value="IRE1-RELATED"/>
    <property type="match status" value="1"/>
</dbReference>
<dbReference type="PANTHER" id="PTHR13954:SF6">
    <property type="entry name" value="NON-SPECIFIC SERINE_THREONINE PROTEIN KINASE"/>
    <property type="match status" value="1"/>
</dbReference>
<dbReference type="Pfam" id="PF00069">
    <property type="entry name" value="Pkinase"/>
    <property type="match status" value="1"/>
</dbReference>
<dbReference type="Pfam" id="PF06479">
    <property type="entry name" value="Ribonuc_2-5A"/>
    <property type="match status" value="1"/>
</dbReference>
<dbReference type="SMART" id="SM00580">
    <property type="entry name" value="PUG"/>
    <property type="match status" value="1"/>
</dbReference>
<dbReference type="SMART" id="SM00220">
    <property type="entry name" value="S_TKc"/>
    <property type="match status" value="1"/>
</dbReference>
<dbReference type="SUPFAM" id="SSF56112">
    <property type="entry name" value="Protein kinase-like (PK-like)"/>
    <property type="match status" value="1"/>
</dbReference>
<dbReference type="SUPFAM" id="SSF50998">
    <property type="entry name" value="Quinoprotein alcohol dehydrogenase-like"/>
    <property type="match status" value="1"/>
</dbReference>
<dbReference type="PROSITE" id="PS51392">
    <property type="entry name" value="KEN"/>
    <property type="match status" value="1"/>
</dbReference>
<dbReference type="PROSITE" id="PS00107">
    <property type="entry name" value="PROTEIN_KINASE_ATP"/>
    <property type="match status" value="1"/>
</dbReference>
<dbReference type="PROSITE" id="PS50011">
    <property type="entry name" value="PROTEIN_KINASE_DOM"/>
    <property type="match status" value="1"/>
</dbReference>
<dbReference type="PROSITE" id="PS00108">
    <property type="entry name" value="PROTEIN_KINASE_ST"/>
    <property type="match status" value="1"/>
</dbReference>